<sequence>MSTFKKEHVQDMYRLSPMQEGMLFHALLDKDKNAHLVQMSIAIEGIVDVELLSESLNILIDRYDVFRTTFLHEKIKQPLQVVLKERPVQLQFKDISSLDEEKREQAIEQYKYQDGETVFDLTRDPLMRVAIFQTGKVNYQMIWSFHHILMDGWCFNIIFNDLFNIYLSLKEKKPLQLEAVQPYKQFIKWLEKQDKQEALRYWKEHLMNYDQSVTLPKKKAAINNTTYEPAQFRFAFDKVLTQQLLRIANQSQVTLNIVFQTIWGIVLQKYNSTNHVVYGSVVSGRPSEISGIEKMVGLFINTLPLRIQTQKDQSFIELVKTVHQNVLFSQQHEYFPLYEIQNHTELKQNLIDHIMVIENYPLVEELQKNSIMQKVGFTVRDVKMFEPTNYDMTVMVLPRDEISVRLDYNAAVYDIDFIKKIEGHMKEVALCVANNPHVLVQDVPLLTKQEKQHLLVELHDSITEYPDKTIHQLFTEQVEKTPEHVAVVFEDEKVTYRELHERSNQLARFLREKGVKKESIIGIMMERSVEMIVGILGILKAGGAFVPIDPEYPKERIGYMLDSVRLVLTQRHLKDKFAFTKETIVIEDPSISHELTEEIDYINESEDLFYIIYTSGTTGKPKGVMLEHKNIVNLLHFTFEKTNINFSDKVLQYTTCSFDVCYQEIFSTLLSGGQLYLIRKETQRDVEQLFDLVKRENIEVLSFPVAFLKFIFNEREFINRFPTCVKHIITAGEQLVVNNEFKRYLHEHNVHLHNHYGPSETHVVTTYTINPEAEIPELPPIGKPISNTWIYILDQEQQLQPQGIVGELYISGANVGRGYLNNQELTAEKFFADPFRPNERMYRTGDLARWLPDGNIEFLGRADHQVKIRGHRIELGEIEAQLLNCKGVKEAVVIDKADDKGGKYLCAYVVMEVEVNDSELREYLGKALPDYMIPSFFVPLDQLPLTPNGKIDRKSLPNLEGIVNTNAKYVVPTNELEEKLAKIWEEVLGISQIGIQDNFFSLGGHSLKAITLISRMNKECNVDIPLRLLFEAPTIQEISNYINGAKKESYVAIQPVPEQEYYPVSSVQKRMFILNEFDRSGTAYNLPGVMFLDGKLNYRQLEAAVKKLVERHEALRTSFHSINGEPVQRVHQNVELQIAYSESTEDQVERIIAEFMQPFALEVRPLLRVGLVKLEAERHLFIMDMHHIISDGVSMQIMIQEIADLYKEKELPTLGIQYKDFTVWHNRLLQSDVIEKQEAYWLNVFTEEIPVLNLPTDYPRPTIQSFDGKRFTFSTGKQLMDDLYKVATETGTTLYMVLLAAYNVFLSKYSGQDDIVVGTPIAGRSHADVENMLGMFVNTLAIRSRLNNEDTFKDFLANVKQTALHAYENPDYPFDTLVEKLGIQRDLSRNPLFDTMFVLQNTDRKSFEVEQITITPYVPNSRHSKFDLTLEVSEEQNEILLCLEYCTKLFTDKTVERMAGHFLQILHAIVGNPTIIISEIEILSEEEKQHILFEFNDTKTTYPHMQTIQGLFEEQVEKTPDHVAVGWKDQTLTYRELNERANQVARVLRQKGVQPDNIVGLLVERSPEMLVGIMGILKAGGAYLPLDPEYPADRISYMIQDCGVRIMLTQQHLLSLVHDEFDCVILDEDSLYKGDSSNLAPVNQAGDLAYIMYTSGSTGKPKGVMVEHRNVIRLVKNTNYVQVREDDRIIQTGAIGFDALTFEVFGSLLHGAELYPVTKDVLLDAEKLHKFLQANQITIMWLTSPLFNQLSQGTEEMFAGLRSLIVGGDALSPKHINNVKRKCPNLTMWNGYGPTENTTFSTCFLIDKEYDDNIPIGKAISNSTVYIMDRYGQLQPVGVPGELCVGGDGVARGYMNQPALTEEKFVPNPFAPGERMYRTGDLARWLPDGTIEYLGRIDQQVKIRGYRIEPGEIETLLVKHKKVKESVIMVVEDNNGQKALCAYYVPEEEVTVSELREYIAKELPVYMVPAYFVQIEQMPLTQNGKVNRSALPKPDGEFGTATEYVAPSSDIEMKLAEIWHNVLGVNKIGVLDNFFELGGHSLRAMTMISQVHKEFDVELPLKVLFETPTISALAQYIADGQKGMYLAIQPVTPTDYYPVSSAQKRMYILYEFEGAGITYNVPNVMFIEGKLDYQRFEYAIKSLVNRHEALRTSFYSLNGEPVQRVHQNVELQIAYSEAKEDEIEQIVESFVQPFDLEIAPLLRVGLVKLASDRYLFLMDMHHIISDGVSMQIITKEIADLYKGKELAELHIQYKDFAVWQNEWFQSDALEKQKTYWLNTFAEDIPVLNLSTDYPRPTIQSFEGDIVTFSAGKQLAEELKRLAAETGTTLYMLLLAAYNVLLHKYSGQEEIVVGTPIAGRSHADVENIVGMFVNTLALKNTPIAVRTFHEFLLEVKQNALEAFENQDYPFENLIEKLQVRRDLSRNPLFDTMFSLSNIDEQVEIGIEGLNFSPYEMQYWIAKFDISFDILEKQDDIQFYFNYCTNLFKKETIERLATHFMHILQEIVINPEIKLCEINMLSEEEQQRVLYDFNGTDATYATNKIFHELFEEQVEKTPDHIAVIDEREKLSYQELNAKANQLARVLRQKGVQPNSMVGIMVDRSLDMIVGMLGVLKAGGAYVPIDIDYPQERISYMMEDSGAALLLTQQKLTQQIAFSGDILYLDQEEWLHEEASNLEPIARPHYIAYIIYTSGTTGKPKGVMIEHQSYVNVAMAWKDAYRLDTFPVRLLQMASFAFAFDVSAGDFARALLTGGQLIVCPNEVKMDPASLYAIIKKYDITIFEATPALVIPLMEYIYEQKLDISQLQILIVGSDSCSMEDFKTLVSRFGSTIRIVNSYGVTEACIDSSYYEQPLSSLHVTGTVPIGKPYANMKMYIMNQYLQIQPVGVIGELCIGGAGVARGYLNRPDLTAEKFVPNPFVPGEKLYRTGDLARWMPDGNVEFLGRNDHQVKIRGIRIELGEIEAQLRKHDSIKEATVIAREDHMKEKYLCAYMVTEGEVNVAELRAYLANDRAAMIPSYFVSLEAMPLTANGKIDKRSLPEPDGSISIGTEYDRPRTMLEGKLEEIWKDVLGLQRVGIHDDFFTIGGHSLKAMAVISQVHKECQTEVPLRVLFETPTIQGLAKYIEETDTEQYMAIQPVSGQDYYPVSSAQKRMFIVNQFVGVGISYNMPSIMLIEGKLERTRLESAFKRLIERHESLRTSFEIINGKPVQKIHEEVDFNMSYQVASNEQVEKMIDEFIQPFDLSVAPLLRVELLKLEEDRHVLIFDMHHIISDGISSNILMKELGELYQGNALPELRIQYKDFAVWQNEWFQSEAFKKQEEYWVNVFADERPILDIPTDYPRPMQQSFDGAQLTFGTGKQLMDGLYRVATETGTTLYMVLLAAYNVLLSKYSGQEDIIVGTPIVGRSHTDLENIVGMFVNTLAMRNKPEGEKTFKAFVSEIKQNALAAFENQDYPFEELIEKLEIQRDLSRNPLFDTLFSLQNIGEESFELAELTCKPFDLVSKLEHAKFDLSLVAVVFEEEIAFGLQYCTKLYKEKTVEQLAQHFIQIVKAIVENPDVKLSDIDMLSEEEKKQIMLEFNDTKIQYTQNQTIQELFEEQVKKTPEHIAIVWEGQALIYHELNIKANQLARVLREKGVTPNHPVAIMTERSLEMIVGIFSILKAGGAYVPIDPAYPQERIQYLLEDSGAALLLTQSHVLNKLPVDIEWLDLTDEQNYVEDGTNLPFMNQSTDLAYIIYTSGTTGKPKGVMIEHQSIINCLQWRKEEYEFGPGDTALQVFSFAFDGFVASLFAPILAGATSVLPKEEEAKDPVALKKLIASEEITHYYGVPSLFSAILDVSSSKDLQNLRCVTLGGEKLPAQIVKKIKEKNKEIEVNNEYGPTENSVVTTIMRDIQVEQEITIGRPLSNVDVYIVNCNHQLQPVGVVGELCIGGQGLARGYLNKPELTADKFVVNPFVPGERMYKTGDLAKWRSDGMIEYVGRVDEQVKVRGYRIELGEIESAILEYEKIKEAVVMVSEHTASEQMLCAYIVGEEDVLTLDLRSYLAKLLPSYMIPNYFIQLDSIPLTPNGKVDRKALPEPQTIGLMAREYVAPRNEIEAQLVLIWQEVLGIELIGITDNFFELGGHSLKATLLVAKIYEYMQIEMPLNVVFKHSTIMKIAEYITHQESENNVHQPILVNVEADREALSLNGEKQRKNIELPILLNEETDRNVFLFAPIGAQGVFYKKLAEQIPTASLYGFDFIEDDDRIQQYIESMIQTQSDGQYVLIGYSSGGNLAFEVAKEMERQGYSVSDLVLFDVYWKGKVFEQTKEEEEENIKIIMEELRENPGMFNMTREDFELYFANEFVKQSFTRKMRKYMSFYTQLVNYGEVEATIHLIQAEFEEEKIDENEKADEEEKTYLEEKWNEKAWNKAAKRFVKYNGYGAHSNMLGGDGLERNSSILKQILQGTFVVK</sequence>
<reference key="1">
    <citation type="journal article" date="1992" name="Mol. Microbiol.">
        <title>Four homologous domains in the primary structure of GrsB are related to domains in a superfamily of adenylate-forming enzymes.</title>
        <authorList>
            <person name="Turgay K."/>
            <person name="Krause M."/>
            <person name="Marahiel M.A."/>
        </authorList>
    </citation>
    <scope>NUCLEOTIDE SEQUENCE [GENOMIC DNA]</scope>
    <source>
        <strain>ATCC 9999 / DSM 2895 / JCM 8504 / NBRC 15520 / NCIMB 7096 / NCTC 7096</strain>
    </source>
</reference>
<reference key="2">
    <citation type="journal article" date="1989" name="J. Bacteriol.">
        <title>Gramicidin S biosynthesis operon containing the structural genes grsA and grsB has an open reading frame encoding a protein homologous to fatty acid thioesterases.</title>
        <authorList>
            <person name="Kraetzschmar J."/>
            <person name="Krause M."/>
            <person name="Marahiel M.A."/>
        </authorList>
    </citation>
    <scope>NUCLEOTIDE SEQUENCE [GENOMIC DNA] OF 1-144</scope>
    <source>
        <strain>ATCC 9999 / DSM 2895 / JCM 8504 / NBRC 15520 / NCIMB 7096 / NCTC 7096</strain>
    </source>
</reference>
<gene>
    <name type="primary">grsB</name>
    <name type="synonym">grs2</name>
</gene>
<keyword id="KW-0002">3D-structure</keyword>
<keyword id="KW-0045">Antibiotic biosynthesis</keyword>
<keyword id="KW-0378">Hydrolase</keyword>
<keyword id="KW-0436">Ligase</keyword>
<keyword id="KW-0511">Multifunctional enzyme</keyword>
<keyword id="KW-0596">Phosphopantetheine</keyword>
<keyword id="KW-0597">Phosphoprotein</keyword>
<keyword id="KW-0677">Repeat</keyword>
<organism>
    <name type="scientific">Aneurinibacillus migulanus</name>
    <name type="common">Bacillus migulanus</name>
    <dbReference type="NCBI Taxonomy" id="47500"/>
    <lineage>
        <taxon>Bacteria</taxon>
        <taxon>Bacillati</taxon>
        <taxon>Bacillota</taxon>
        <taxon>Bacilli</taxon>
        <taxon>Bacillales</taxon>
        <taxon>Paenibacillaceae</taxon>
        <taxon>Aneurinibacillus group</taxon>
        <taxon>Aneurinibacillus</taxon>
    </lineage>
</organism>
<accession>P0C063</accession>
<accession>P14688</accession>
<accession>Q44928</accession>
<dbReference type="EMBL" id="X61658">
    <property type="protein sequence ID" value="CAA43838.1"/>
    <property type="molecule type" value="Genomic_DNA"/>
</dbReference>
<dbReference type="EMBL" id="M29703">
    <property type="protein sequence ID" value="AAA58719.1"/>
    <property type="molecule type" value="Genomic_DNA"/>
</dbReference>
<dbReference type="EMBL" id="X15577">
    <property type="protein sequence ID" value="CAA33604.1"/>
    <property type="molecule type" value="Genomic_DNA"/>
</dbReference>
<dbReference type="PIR" id="S20542">
    <property type="entry name" value="YGBSG2"/>
</dbReference>
<dbReference type="PDB" id="8P5O">
    <property type="method" value="X-ray"/>
    <property type="resolution" value="2.60 A"/>
    <property type="chains" value="A/B/C/D=460-862"/>
</dbReference>
<dbReference type="PDBsum" id="8P5O"/>
<dbReference type="SMR" id="P0C063"/>
<dbReference type="STRING" id="47500.AF333_17645"/>
<dbReference type="KEGG" id="ag:CAA43838"/>
<dbReference type="BioCyc" id="MetaCyc:MONOMER-14129"/>
<dbReference type="UniPathway" id="UPA00102"/>
<dbReference type="GO" id="GO:0005829">
    <property type="term" value="C:cytosol"/>
    <property type="evidence" value="ECO:0007669"/>
    <property type="project" value="TreeGrafter"/>
</dbReference>
<dbReference type="GO" id="GO:0016787">
    <property type="term" value="F:hydrolase activity"/>
    <property type="evidence" value="ECO:0007669"/>
    <property type="project" value="UniProtKB-KW"/>
</dbReference>
<dbReference type="GO" id="GO:0016874">
    <property type="term" value="F:ligase activity"/>
    <property type="evidence" value="ECO:0007669"/>
    <property type="project" value="UniProtKB-KW"/>
</dbReference>
<dbReference type="GO" id="GO:0031177">
    <property type="term" value="F:phosphopantetheine binding"/>
    <property type="evidence" value="ECO:0007669"/>
    <property type="project" value="InterPro"/>
</dbReference>
<dbReference type="GO" id="GO:0043041">
    <property type="term" value="P:amino acid activation for nonribosomal peptide biosynthetic process"/>
    <property type="evidence" value="ECO:0007669"/>
    <property type="project" value="TreeGrafter"/>
</dbReference>
<dbReference type="GO" id="GO:0017000">
    <property type="term" value="P:antibiotic biosynthetic process"/>
    <property type="evidence" value="ECO:0007669"/>
    <property type="project" value="UniProtKB-KW"/>
</dbReference>
<dbReference type="GO" id="GO:0008610">
    <property type="term" value="P:lipid biosynthetic process"/>
    <property type="evidence" value="ECO:0007669"/>
    <property type="project" value="UniProtKB-ARBA"/>
</dbReference>
<dbReference type="GO" id="GO:0044550">
    <property type="term" value="P:secondary metabolite biosynthetic process"/>
    <property type="evidence" value="ECO:0007669"/>
    <property type="project" value="TreeGrafter"/>
</dbReference>
<dbReference type="CDD" id="cd05930">
    <property type="entry name" value="A_NRPS"/>
    <property type="match status" value="1"/>
</dbReference>
<dbReference type="CDD" id="cd17650">
    <property type="entry name" value="A_NRPS_PpsD_like"/>
    <property type="match status" value="1"/>
</dbReference>
<dbReference type="CDD" id="cd17656">
    <property type="entry name" value="A_NRPS_ProA"/>
    <property type="match status" value="1"/>
</dbReference>
<dbReference type="CDD" id="cd12117">
    <property type="entry name" value="A_NRPS_Srf_like"/>
    <property type="match status" value="1"/>
</dbReference>
<dbReference type="CDD" id="cd19543">
    <property type="entry name" value="DCL_NRPS"/>
    <property type="match status" value="1"/>
</dbReference>
<dbReference type="CDD" id="cd19531">
    <property type="entry name" value="LCL_NRPS-like"/>
    <property type="match status" value="3"/>
</dbReference>
<dbReference type="FunFam" id="3.30.300.30:FF:000010">
    <property type="entry name" value="Enterobactin synthetase component F"/>
    <property type="match status" value="3"/>
</dbReference>
<dbReference type="FunFam" id="3.30.559.10:FF:000012">
    <property type="entry name" value="Non-ribosomal peptide synthetase"/>
    <property type="match status" value="1"/>
</dbReference>
<dbReference type="FunFam" id="3.40.50.12780:FF:000012">
    <property type="entry name" value="Non-ribosomal peptide synthetase"/>
    <property type="match status" value="4"/>
</dbReference>
<dbReference type="FunFam" id="3.40.50.980:FF:000001">
    <property type="entry name" value="Non-ribosomal peptide synthetase"/>
    <property type="match status" value="4"/>
</dbReference>
<dbReference type="FunFam" id="2.30.38.10:FF:000001">
    <property type="entry name" value="Non-ribosomal peptide synthetase PvdI"/>
    <property type="match status" value="4"/>
</dbReference>
<dbReference type="FunFam" id="1.10.1200.10:FF:000005">
    <property type="entry name" value="Nonribosomal peptide synthetase 1"/>
    <property type="match status" value="4"/>
</dbReference>
<dbReference type="Gene3D" id="3.30.300.30">
    <property type="match status" value="4"/>
</dbReference>
<dbReference type="Gene3D" id="3.40.50.980">
    <property type="match status" value="8"/>
</dbReference>
<dbReference type="Gene3D" id="1.10.1200.10">
    <property type="entry name" value="ACP-like"/>
    <property type="match status" value="4"/>
</dbReference>
<dbReference type="Gene3D" id="3.40.50.1820">
    <property type="entry name" value="alpha/beta hydrolase"/>
    <property type="match status" value="1"/>
</dbReference>
<dbReference type="Gene3D" id="3.30.559.10">
    <property type="entry name" value="Chloramphenicol acetyltransferase-like domain"/>
    <property type="match status" value="4"/>
</dbReference>
<dbReference type="Gene3D" id="1.10.287.490">
    <property type="entry name" value="Helix hairpin bin"/>
    <property type="match status" value="1"/>
</dbReference>
<dbReference type="Gene3D" id="2.30.38.10">
    <property type="entry name" value="Luciferase, Domain 3"/>
    <property type="match status" value="4"/>
</dbReference>
<dbReference type="Gene3D" id="3.30.559.30">
    <property type="entry name" value="Nonribosomal peptide synthetase, condensation domain"/>
    <property type="match status" value="4"/>
</dbReference>
<dbReference type="InterPro" id="IPR010071">
    <property type="entry name" value="AA_adenyl_dom"/>
</dbReference>
<dbReference type="InterPro" id="IPR029058">
    <property type="entry name" value="AB_hydrolase_fold"/>
</dbReference>
<dbReference type="InterPro" id="IPR036736">
    <property type="entry name" value="ACP-like_sf"/>
</dbReference>
<dbReference type="InterPro" id="IPR025110">
    <property type="entry name" value="AMP-bd_C"/>
</dbReference>
<dbReference type="InterPro" id="IPR045851">
    <property type="entry name" value="AMP-bd_C_sf"/>
</dbReference>
<dbReference type="InterPro" id="IPR020845">
    <property type="entry name" value="AMP-binding_CS"/>
</dbReference>
<dbReference type="InterPro" id="IPR000873">
    <property type="entry name" value="AMP-dep_synth/lig_dom"/>
</dbReference>
<dbReference type="InterPro" id="IPR023213">
    <property type="entry name" value="CAT-like_dom_sf"/>
</dbReference>
<dbReference type="InterPro" id="IPR001242">
    <property type="entry name" value="Condensatn"/>
</dbReference>
<dbReference type="InterPro" id="IPR020806">
    <property type="entry name" value="PKS_PP-bd"/>
</dbReference>
<dbReference type="InterPro" id="IPR009081">
    <property type="entry name" value="PP-bd_ACP"/>
</dbReference>
<dbReference type="InterPro" id="IPR006162">
    <property type="entry name" value="Ppantetheine_attach_site"/>
</dbReference>
<dbReference type="InterPro" id="IPR001031">
    <property type="entry name" value="Thioesterase"/>
</dbReference>
<dbReference type="NCBIfam" id="TIGR01733">
    <property type="entry name" value="AA-adenyl-dom"/>
    <property type="match status" value="4"/>
</dbReference>
<dbReference type="NCBIfam" id="NF003417">
    <property type="entry name" value="PRK04813.1"/>
    <property type="match status" value="4"/>
</dbReference>
<dbReference type="PANTHER" id="PTHR45527:SF1">
    <property type="entry name" value="FATTY ACID SYNTHASE"/>
    <property type="match status" value="1"/>
</dbReference>
<dbReference type="PANTHER" id="PTHR45527">
    <property type="entry name" value="NONRIBOSOMAL PEPTIDE SYNTHETASE"/>
    <property type="match status" value="1"/>
</dbReference>
<dbReference type="Pfam" id="PF00501">
    <property type="entry name" value="AMP-binding"/>
    <property type="match status" value="4"/>
</dbReference>
<dbReference type="Pfam" id="PF13193">
    <property type="entry name" value="AMP-binding_C"/>
    <property type="match status" value="4"/>
</dbReference>
<dbReference type="Pfam" id="PF00668">
    <property type="entry name" value="Condensation"/>
    <property type="match status" value="4"/>
</dbReference>
<dbReference type="Pfam" id="PF00550">
    <property type="entry name" value="PP-binding"/>
    <property type="match status" value="4"/>
</dbReference>
<dbReference type="Pfam" id="PF00975">
    <property type="entry name" value="Thioesterase"/>
    <property type="match status" value="1"/>
</dbReference>
<dbReference type="SMART" id="SM00823">
    <property type="entry name" value="PKS_PP"/>
    <property type="match status" value="4"/>
</dbReference>
<dbReference type="SUPFAM" id="SSF56801">
    <property type="entry name" value="Acetyl-CoA synthetase-like"/>
    <property type="match status" value="4"/>
</dbReference>
<dbReference type="SUPFAM" id="SSF47336">
    <property type="entry name" value="ACP-like"/>
    <property type="match status" value="4"/>
</dbReference>
<dbReference type="SUPFAM" id="SSF53474">
    <property type="entry name" value="alpha/beta-Hydrolases"/>
    <property type="match status" value="1"/>
</dbReference>
<dbReference type="SUPFAM" id="SSF52777">
    <property type="entry name" value="CoA-dependent acyltransferases"/>
    <property type="match status" value="8"/>
</dbReference>
<dbReference type="PROSITE" id="PS00455">
    <property type="entry name" value="AMP_BINDING"/>
    <property type="match status" value="4"/>
</dbReference>
<dbReference type="PROSITE" id="PS50075">
    <property type="entry name" value="CARRIER"/>
    <property type="match status" value="4"/>
</dbReference>
<dbReference type="PROSITE" id="PS00012">
    <property type="entry name" value="PHOSPHOPANTETHEINE"/>
    <property type="match status" value="4"/>
</dbReference>
<name>GRSB_ANEMI</name>
<evidence type="ECO:0000250" key="1"/>
<evidence type="ECO:0000255" key="2">
    <source>
        <dbReference type="PROSITE-ProRule" id="PRU00258"/>
    </source>
</evidence>
<evidence type="ECO:0000305" key="3"/>
<evidence type="ECO:0007829" key="4">
    <source>
        <dbReference type="PDB" id="8P5O"/>
    </source>
</evidence>
<comment type="function">
    <text>This protein is a multifunctional enzyme, able to activate and polymerize the amino acids Pro, Val, Orn and Leu. Activation sites for these AA consist of individual domains.</text>
</comment>
<comment type="cofactor">
    <cofactor>
        <name>pantetheine 4'-phosphate</name>
        <dbReference type="ChEBI" id="CHEBI:47942"/>
    </cofactor>
    <text>Binds 4 phosphopantetheines covalently.</text>
</comment>
<comment type="pathway">
    <text>Antibiotic biosynthesis; gramicidin S biosynthesis.</text>
</comment>
<comment type="subunit">
    <text>Large multienzyme complex of GrsA and GrsB.</text>
</comment>
<comment type="domain">
    <text>Consists of four modules, and harbors a putative thioesterase domain at its C-terminal end. Each module incorporates one amino acid into the peptide product and can be further subdivided into domains responsible for substrate adenylation, thiolation, condensation (not for the initiation module), and epimerization (optional), and N methylation (optional).</text>
</comment>
<comment type="similarity">
    <text evidence="3">Belongs to the ATP-dependent AMP-binding enzyme family.</text>
</comment>
<proteinExistence type="evidence at protein level"/>
<feature type="initiator methionine" description="Removed" evidence="1">
    <location>
        <position position="1"/>
    </location>
</feature>
<feature type="chain" id="PRO_0000193087" description="Gramicidin S synthase 2">
    <location>
        <begin position="2"/>
        <end position="4451"/>
    </location>
</feature>
<feature type="domain" description="Carrier 1" evidence="2">
    <location>
        <begin position="971"/>
        <end position="1046"/>
    </location>
</feature>
<feature type="domain" description="Carrier 2" evidence="2">
    <location>
        <begin position="2006"/>
        <end position="2081"/>
    </location>
</feature>
<feature type="domain" description="Carrier 3" evidence="2">
    <location>
        <begin position="3052"/>
        <end position="3127"/>
    </location>
</feature>
<feature type="domain" description="Carrier 4" evidence="2">
    <location>
        <begin position="4090"/>
        <end position="4165"/>
    </location>
</feature>
<feature type="region of interest" description="Domain 1 (proline-activating)" evidence="1">
    <location>
        <begin position="467"/>
        <end position="1044"/>
    </location>
</feature>
<feature type="region of interest" description="Domain 2 (valine-activating)" evidence="1">
    <location>
        <begin position="1521"/>
        <end position="2080"/>
    </location>
</feature>
<feature type="region of interest" description="Domain 3 (ornithine-activating)" evidence="1">
    <location>
        <begin position="2538"/>
        <end position="3135"/>
    </location>
</feature>
<feature type="region of interest" description="Domain 4 (leucine-activating)">
    <location>
        <begin position="3591"/>
        <end position="4173"/>
    </location>
</feature>
<feature type="modified residue" description="O-(pantetheine 4'-phosphoryl)serine" evidence="2">
    <location>
        <position position="1006"/>
    </location>
</feature>
<feature type="modified residue" description="O-(pantetheine 4'-phosphoryl)serine" evidence="2">
    <location>
        <position position="2041"/>
    </location>
</feature>
<feature type="modified residue" description="O-(pantetheine 4'-phosphoryl)serine" evidence="2">
    <location>
        <position position="3087"/>
    </location>
</feature>
<feature type="modified residue" description="O-(pantetheine 4'-phosphoryl)serine" evidence="2">
    <location>
        <position position="4125"/>
    </location>
</feature>
<feature type="sequence conflict" description="In Ref. 1; CAA43838." evidence="3" ref="1">
    <original>TCSFDVCYQEI</original>
    <variation>NAVLTCVTKKF</variation>
    <location>
        <begin position="655"/>
        <end position="665"/>
    </location>
</feature>
<feature type="sequence conflict" description="In Ref. 1; CAA43838." evidence="3" ref="1">
    <original>QLPLTP</original>
    <variation>HVRLHL</variation>
    <location>
        <begin position="942"/>
        <end position="947"/>
    </location>
</feature>
<feature type="sequence conflict" description="In Ref. 1; CAA43838." evidence="3" ref="1">
    <original>YWLNVFTEEIPVLNLPTDYPRPTIQSFDGKRFTFSTGKQLMDDLYKVATETGTTLYMVLLAAYNV</original>
    <variation>SLAERICRRDSSIESTDRLPKYQPFKALMVKDLHSVQESSLWMIYTRWQQKQEQHYIWFYLLRIMF</variation>
    <location>
        <begin position="1240"/>
        <end position="1304"/>
    </location>
</feature>
<feature type="sequence conflict" description="In Ref. 1; CAA43838." evidence="3" ref="1">
    <original>HMQTIQGLFEEQVEKTP</original>
    <variation>LCKQFKDYLRNRWRRRA</variation>
    <location>
        <begin position="1504"/>
        <end position="1520"/>
    </location>
</feature>
<feature type="sequence conflict" description="In Ref. 1; CAA43838." evidence="3" ref="1">
    <original>CIDSSYYE</original>
    <variation>ALILAIMN</variation>
    <location>
        <begin position="2842"/>
        <end position="2849"/>
    </location>
</feature>
<feature type="helix" evidence="4">
    <location>
        <begin position="470"/>
        <end position="480"/>
    </location>
</feature>
<feature type="strand" evidence="4">
    <location>
        <begin position="484"/>
        <end position="489"/>
    </location>
</feature>
<feature type="strand" evidence="4">
    <location>
        <begin position="492"/>
        <end position="495"/>
    </location>
</feature>
<feature type="helix" evidence="4">
    <location>
        <begin position="496"/>
        <end position="512"/>
    </location>
</feature>
<feature type="strand" evidence="4">
    <location>
        <begin position="520"/>
        <end position="524"/>
    </location>
</feature>
<feature type="helix" evidence="4">
    <location>
        <begin position="529"/>
        <end position="541"/>
    </location>
</feature>
<feature type="strand" evidence="4">
    <location>
        <begin position="544"/>
        <end position="547"/>
    </location>
</feature>
<feature type="helix" evidence="4">
    <location>
        <begin position="554"/>
        <end position="560"/>
    </location>
</feature>
<feature type="turn" evidence="4">
    <location>
        <begin position="561"/>
        <end position="563"/>
    </location>
</feature>
<feature type="strand" evidence="4">
    <location>
        <begin position="565"/>
        <end position="569"/>
    </location>
</feature>
<feature type="helix" evidence="4">
    <location>
        <begin position="571"/>
        <end position="577"/>
    </location>
</feature>
<feature type="strand" evidence="4">
    <location>
        <begin position="583"/>
        <end position="585"/>
    </location>
</feature>
<feature type="helix" evidence="4">
    <location>
        <begin position="591"/>
        <end position="593"/>
    </location>
</feature>
<feature type="strand" evidence="4">
    <location>
        <begin position="607"/>
        <end position="613"/>
    </location>
</feature>
<feature type="strand" evidence="4">
    <location>
        <begin position="623"/>
        <end position="627"/>
    </location>
</feature>
<feature type="helix" evidence="4">
    <location>
        <begin position="628"/>
        <end position="641"/>
    </location>
</feature>
<feature type="strand" evidence="4">
    <location>
        <begin position="648"/>
        <end position="651"/>
    </location>
</feature>
<feature type="helix" evidence="4">
    <location>
        <begin position="660"/>
        <end position="669"/>
    </location>
</feature>
<feature type="turn" evidence="4">
    <location>
        <begin position="670"/>
        <end position="672"/>
    </location>
</feature>
<feature type="strand" evidence="4">
    <location>
        <begin position="674"/>
        <end position="676"/>
    </location>
</feature>
<feature type="helix" evidence="4">
    <location>
        <begin position="680"/>
        <end position="683"/>
    </location>
</feature>
<feature type="helix" evidence="4">
    <location>
        <begin position="686"/>
        <end position="696"/>
    </location>
</feature>
<feature type="strand" evidence="4">
    <location>
        <begin position="700"/>
        <end position="704"/>
    </location>
</feature>
<feature type="helix" evidence="4">
    <location>
        <begin position="705"/>
        <end position="711"/>
    </location>
</feature>
<feature type="helix" evidence="4">
    <location>
        <begin position="715"/>
        <end position="720"/>
    </location>
</feature>
<feature type="strand" evidence="4">
    <location>
        <begin position="727"/>
        <end position="733"/>
    </location>
</feature>
<feature type="helix" evidence="4">
    <location>
        <begin position="739"/>
        <end position="748"/>
    </location>
</feature>
<feature type="strand" evidence="4">
    <location>
        <begin position="751"/>
        <end position="756"/>
    </location>
</feature>
<feature type="turn" evidence="4">
    <location>
        <begin position="759"/>
        <end position="761"/>
    </location>
</feature>
<feature type="strand" evidence="4">
    <location>
        <begin position="765"/>
        <end position="769"/>
    </location>
</feature>
<feature type="strand" evidence="4">
    <location>
        <begin position="782"/>
        <end position="784"/>
    </location>
</feature>
<feature type="strand" evidence="4">
    <location>
        <begin position="788"/>
        <end position="793"/>
    </location>
</feature>
<feature type="strand" evidence="4">
    <location>
        <begin position="806"/>
        <end position="812"/>
    </location>
</feature>
<feature type="helix" evidence="4">
    <location>
        <begin position="823"/>
        <end position="829"/>
    </location>
</feature>
<feature type="strand" evidence="4">
    <location>
        <begin position="830"/>
        <end position="832"/>
    </location>
</feature>
<feature type="strand" evidence="4">
    <location>
        <begin position="834"/>
        <end position="836"/>
    </location>
</feature>
<feature type="strand" evidence="4">
    <location>
        <begin position="839"/>
        <end position="850"/>
    </location>
</feature>
<feature type="strand" evidence="4">
    <location>
        <begin position="856"/>
        <end position="858"/>
    </location>
</feature>
<protein>
    <recommendedName>
        <fullName>Gramicidin S synthase 2</fullName>
    </recommendedName>
    <alternativeName>
        <fullName>Gramicidin S synthase II</fullName>
    </alternativeName>
    <domain>
        <recommendedName>
            <fullName>ATP-dependent proline adenylase</fullName>
            <shortName>ProA</shortName>
        </recommendedName>
        <alternativeName>
            <fullName>Proline activase</fullName>
        </alternativeName>
    </domain>
    <domain>
        <recommendedName>
            <fullName>ATP-dependent valine adenylase</fullName>
            <shortName>ValA</shortName>
        </recommendedName>
        <alternativeName>
            <fullName>Valine activase</fullName>
        </alternativeName>
    </domain>
    <domain>
        <recommendedName>
            <fullName>ATP-dependent ornithine adenylase</fullName>
            <shortName>OrnA</shortName>
        </recommendedName>
        <alternativeName>
            <fullName>Ornithine activase</fullName>
        </alternativeName>
    </domain>
    <domain>
        <recommendedName>
            <fullName>ATP-dependent leucine adenylase</fullName>
            <shortName>LeuA</shortName>
        </recommendedName>
        <alternativeName>
            <fullName>Leucine activase</fullName>
        </alternativeName>
    </domain>
</protein>